<organism>
    <name type="scientific">Arabidopsis thaliana</name>
    <name type="common">Mouse-ear cress</name>
    <dbReference type="NCBI Taxonomy" id="3702"/>
    <lineage>
        <taxon>Eukaryota</taxon>
        <taxon>Viridiplantae</taxon>
        <taxon>Streptophyta</taxon>
        <taxon>Embryophyta</taxon>
        <taxon>Tracheophyta</taxon>
        <taxon>Spermatophyta</taxon>
        <taxon>Magnoliopsida</taxon>
        <taxon>eudicotyledons</taxon>
        <taxon>Gunneridae</taxon>
        <taxon>Pentapetalae</taxon>
        <taxon>rosids</taxon>
        <taxon>malvids</taxon>
        <taxon>Brassicales</taxon>
        <taxon>Brassicaceae</taxon>
        <taxon>Camelineae</taxon>
        <taxon>Arabidopsis</taxon>
    </lineage>
</organism>
<keyword id="KW-1015">Disulfide bond</keyword>
<keyword id="KW-0256">Endoplasmic reticulum</keyword>
<keyword id="KW-0325">Glycoprotein</keyword>
<keyword id="KW-0430">Lectin</keyword>
<keyword id="KW-1185">Reference proteome</keyword>
<keyword id="KW-0732">Signal</keyword>
<sequence>MRITQILLCLVIVALSSSSHVWSDQIFPAHLVGTFSRNNREPKYKIEFLPEDSPFHPGDNLESMVMLDKHGNRFLCYLPKEEKATSGWTSSQQNISTVMMETQQLVKLKTPDELLQPLSEKCLFRQEGWWSYEFCHQKYVRQLHVEDENKIVQEFFLGTFDPEATAAFNQTVSDASTDASQRYHSHVYTNGTTCDLTGSPREVEVRFVCAETRAMVTSITELSTCKYALTVQCPTLCKHPLFQLEKPVSHTIHCNAIPVEEDATRNKEEQAVDESPKMIADS</sequence>
<name>OS9_ARATH</name>
<protein>
    <recommendedName>
        <fullName evidence="9">Protein OS-9 homolog</fullName>
        <shortName evidence="8">AtOS9</shortName>
    </recommendedName>
    <alternativeName>
        <fullName evidence="8">Protein EMS-MUTAGENIZED BRI1 SUPPRESSOR 6</fullName>
    </alternativeName>
</protein>
<comment type="function">
    <text evidence="5 6">Lectin which functions in endoplasmic reticulum (ER) quality control and ER-associated degradation (ERAD). May bind terminally misfolded non-glycosylated proteins as well as improperly folded glycoproteins, retain them in the ER, and possibly transfer them to the ubiquitination machinery and promote their degradation. Targets the misfolded LRR receptor kinase BRI1 and the misfolded receptor-like kinase EFR.</text>
</comment>
<comment type="subunit">
    <text evidence="5 6">Interacts with HRD3A.</text>
</comment>
<comment type="subcellular location">
    <subcellularLocation>
        <location evidence="5 6">Endoplasmic reticulum</location>
    </subcellularLocation>
</comment>
<comment type="disruption phenotype">
    <text evidence="5">No visible phenotype under normal growth conditions, but mutant plants have enhanced sensitivity to salt stress.</text>
</comment>
<comment type="similarity">
    <text evidence="9">Belongs to the OS-9 family.</text>
</comment>
<comment type="sequence caution" evidence="9">
    <conflict type="erroneous gene model prediction">
        <sequence resource="EMBL-CDS" id="AAC13579"/>
    </conflict>
</comment>
<comment type="sequence caution" evidence="9">
    <conflict type="erroneous gene model prediction">
        <sequence resource="EMBL-CDS" id="BAB10015"/>
    </conflict>
</comment>
<feature type="signal peptide" evidence="2">
    <location>
        <begin position="1"/>
        <end position="23"/>
    </location>
</feature>
<feature type="chain" id="PRO_0000431276" description="Protein OS-9 homolog" evidence="2">
    <location>
        <begin position="24"/>
        <end position="282"/>
    </location>
</feature>
<feature type="domain" description="MRH" evidence="3">
    <location>
        <begin position="120"/>
        <end position="239"/>
    </location>
</feature>
<feature type="region of interest" description="Disordered" evidence="4">
    <location>
        <begin position="262"/>
        <end position="282"/>
    </location>
</feature>
<feature type="compositionally biased region" description="Basic and acidic residues" evidence="4">
    <location>
        <begin position="262"/>
        <end position="276"/>
    </location>
</feature>
<feature type="binding site" evidence="1">
    <location>
        <position position="129"/>
    </location>
    <ligand>
        <name>a mannooligosaccharide derivative</name>
        <dbReference type="ChEBI" id="CHEBI:71274"/>
    </ligand>
</feature>
<feature type="binding site" evidence="1">
    <location>
        <position position="130"/>
    </location>
    <ligand>
        <name>a mannooligosaccharide derivative</name>
        <dbReference type="ChEBI" id="CHEBI:71274"/>
    </ligand>
</feature>
<feature type="binding site" evidence="1">
    <location>
        <position position="142"/>
    </location>
    <ligand>
        <name>a mannooligosaccharide derivative</name>
        <dbReference type="ChEBI" id="CHEBI:71274"/>
    </ligand>
</feature>
<feature type="binding site" evidence="1">
    <location>
        <position position="195"/>
    </location>
    <ligand>
        <name>a mannooligosaccharide derivative</name>
        <dbReference type="ChEBI" id="CHEBI:71274"/>
    </ligand>
</feature>
<feature type="binding site" evidence="1">
    <location>
        <position position="201"/>
    </location>
    <ligand>
        <name>a mannooligosaccharide derivative</name>
        <dbReference type="ChEBI" id="CHEBI:71274"/>
    </ligand>
</feature>
<feature type="binding site" evidence="1">
    <location>
        <position position="221"/>
    </location>
    <ligand>
        <name>a mannooligosaccharide derivative</name>
        <dbReference type="ChEBI" id="CHEBI:71274"/>
    </ligand>
</feature>
<feature type="binding site" evidence="1">
    <location>
        <position position="227"/>
    </location>
    <ligand>
        <name>a mannooligosaccharide derivative</name>
        <dbReference type="ChEBI" id="CHEBI:71274"/>
    </ligand>
</feature>
<feature type="glycosylation site" description="N-linked (GlcNAc...) asparagine" evidence="7">
    <location>
        <position position="94"/>
    </location>
</feature>
<feature type="glycosylation site" description="N-linked (GlcNAc...) asparagine" evidence="7">
    <location>
        <position position="169"/>
    </location>
</feature>
<feature type="glycosylation site" description="N-linked (GlcNAc...) asparagine" evidence="7">
    <location>
        <position position="190"/>
    </location>
</feature>
<feature type="disulfide bond" evidence="3">
    <location>
        <begin position="122"/>
        <end position="135"/>
    </location>
</feature>
<feature type="disulfide bond" evidence="3">
    <location>
        <begin position="194"/>
        <end position="225"/>
    </location>
</feature>
<feature type="disulfide bond" evidence="3">
    <location>
        <begin position="209"/>
        <end position="237"/>
    </location>
</feature>
<feature type="mutagenesis site" description="No effect on function." evidence="6">
    <original>Y</original>
    <variation>A</variation>
    <location>
        <position position="132"/>
    </location>
</feature>
<feature type="mutagenesis site" description="Loss of function in ERAD." evidence="6">
    <original>Q</original>
    <variation>E</variation>
    <location>
        <position position="142"/>
    </location>
</feature>
<feature type="mutagenesis site" description="In ebs6-1; Loss of function in ERAD." evidence="6">
    <original>G</original>
    <variation>E</variation>
    <location>
        <position position="191"/>
    </location>
</feature>
<feature type="mutagenesis site" description="Loss of function in ERAD." evidence="6">
    <original>E</original>
    <variation>A</variation>
    <location>
        <position position="221"/>
    </location>
</feature>
<evidence type="ECO:0000250" key="1">
    <source>
        <dbReference type="UniProtKB" id="Q13438"/>
    </source>
</evidence>
<evidence type="ECO:0000255" key="2"/>
<evidence type="ECO:0000255" key="3">
    <source>
        <dbReference type="PROSITE-ProRule" id="PRU01262"/>
    </source>
</evidence>
<evidence type="ECO:0000256" key="4">
    <source>
        <dbReference type="SAM" id="MobiDB-lite"/>
    </source>
</evidence>
<evidence type="ECO:0000269" key="5">
    <source>
    </source>
</evidence>
<evidence type="ECO:0000269" key="6">
    <source>
    </source>
</evidence>
<evidence type="ECO:0000269" key="7">
    <source ref="1"/>
</evidence>
<evidence type="ECO:0000303" key="8">
    <source>
    </source>
</evidence>
<evidence type="ECO:0000305" key="9"/>
<evidence type="ECO:0000312" key="10">
    <source>
        <dbReference type="Araport" id="AT5G35080"/>
    </source>
</evidence>
<evidence type="ECO:0000312" key="11">
    <source>
        <dbReference type="EMBL" id="AAC13579.1"/>
    </source>
</evidence>
<evidence type="ECO:0000312" key="12">
    <source>
        <dbReference type="EMBL" id="BAB10015.1"/>
    </source>
</evidence>
<gene>
    <name evidence="8" type="primary">OS9</name>
    <name evidence="8" type="synonym">EBS6</name>
    <name evidence="10" type="ordered locus">At5g35080</name>
    <name evidence="11" type="ORF">F7N22.4</name>
    <name evidence="12" type="ORF">T13C12.2</name>
</gene>
<reference key="1">
    <citation type="submission" date="1999-09" db="EMBL/GenBank/DDBJ databases">
        <title>Structural analysis of Arabidopsis thaliana chromosome 5. XI.</title>
        <authorList>
            <person name="Kaneko T."/>
            <person name="Katoh T."/>
            <person name="Asamizu E."/>
            <person name="Sato S."/>
            <person name="Nakamura Y."/>
            <person name="Kotani H."/>
            <person name="Tabata S."/>
        </authorList>
    </citation>
    <scope>NUCLEOTIDE SEQUENCE [LARGE SCALE GENOMIC DNA]</scope>
    <source>
        <strain>cv. Columbia</strain>
    </source>
</reference>
<reference key="2">
    <citation type="journal article" date="2000" name="Nature">
        <title>Sequence and analysis of chromosome 5 of the plant Arabidopsis thaliana.</title>
        <authorList>
            <person name="Tabata S."/>
            <person name="Kaneko T."/>
            <person name="Nakamura Y."/>
            <person name="Kotani H."/>
            <person name="Kato T."/>
            <person name="Asamizu E."/>
            <person name="Miyajima N."/>
            <person name="Sasamoto S."/>
            <person name="Kimura T."/>
            <person name="Hosouchi T."/>
            <person name="Kawashima K."/>
            <person name="Kohara M."/>
            <person name="Matsumoto M."/>
            <person name="Matsuno A."/>
            <person name="Muraki A."/>
            <person name="Nakayama S."/>
            <person name="Nakazaki N."/>
            <person name="Naruo K."/>
            <person name="Okumura S."/>
            <person name="Shinpo S."/>
            <person name="Takeuchi C."/>
            <person name="Wada T."/>
            <person name="Watanabe A."/>
            <person name="Yamada M."/>
            <person name="Yasuda M."/>
            <person name="Sato S."/>
            <person name="de la Bastide M."/>
            <person name="Huang E."/>
            <person name="Spiegel L."/>
            <person name="Gnoj L."/>
            <person name="O'Shaughnessy A."/>
            <person name="Preston R."/>
            <person name="Habermann K."/>
            <person name="Murray J."/>
            <person name="Johnson D."/>
            <person name="Rohlfing T."/>
            <person name="Nelson J."/>
            <person name="Stoneking T."/>
            <person name="Pepin K."/>
            <person name="Spieth J."/>
            <person name="Sekhon M."/>
            <person name="Armstrong J."/>
            <person name="Becker M."/>
            <person name="Belter E."/>
            <person name="Cordum H."/>
            <person name="Cordes M."/>
            <person name="Courtney L."/>
            <person name="Courtney W."/>
            <person name="Dante M."/>
            <person name="Du H."/>
            <person name="Edwards J."/>
            <person name="Fryman J."/>
            <person name="Haakensen B."/>
            <person name="Lamar E."/>
            <person name="Latreille P."/>
            <person name="Leonard S."/>
            <person name="Meyer R."/>
            <person name="Mulvaney E."/>
            <person name="Ozersky P."/>
            <person name="Riley A."/>
            <person name="Strowmatt C."/>
            <person name="Wagner-McPherson C."/>
            <person name="Wollam A."/>
            <person name="Yoakum M."/>
            <person name="Bell M."/>
            <person name="Dedhia N."/>
            <person name="Parnell L."/>
            <person name="Shah R."/>
            <person name="Rodriguez M."/>
            <person name="Hoon See L."/>
            <person name="Vil D."/>
            <person name="Baker J."/>
            <person name="Kirchoff K."/>
            <person name="Toth K."/>
            <person name="King L."/>
            <person name="Bahret A."/>
            <person name="Miller B."/>
            <person name="Marra M.A."/>
            <person name="Martienssen R."/>
            <person name="McCombie W.R."/>
            <person name="Wilson R.K."/>
            <person name="Murphy G."/>
            <person name="Bancroft I."/>
            <person name="Volckaert G."/>
            <person name="Wambutt R."/>
            <person name="Duesterhoeft A."/>
            <person name="Stiekema W."/>
            <person name="Pohl T."/>
            <person name="Entian K.-D."/>
            <person name="Terryn N."/>
            <person name="Hartley N."/>
            <person name="Bent E."/>
            <person name="Johnson S."/>
            <person name="Langham S.-A."/>
            <person name="McCullagh B."/>
            <person name="Robben J."/>
            <person name="Grymonprez B."/>
            <person name="Zimmermann W."/>
            <person name="Ramsperger U."/>
            <person name="Wedler H."/>
            <person name="Balke K."/>
            <person name="Wedler E."/>
            <person name="Peters S."/>
            <person name="van Staveren M."/>
            <person name="Dirkse W."/>
            <person name="Mooijman P."/>
            <person name="Klein Lankhorst R."/>
            <person name="Weitzenegger T."/>
            <person name="Bothe G."/>
            <person name="Rose M."/>
            <person name="Hauf J."/>
            <person name="Berneiser S."/>
            <person name="Hempel S."/>
            <person name="Feldpausch M."/>
            <person name="Lamberth S."/>
            <person name="Villarroel R."/>
            <person name="Gielen J."/>
            <person name="Ardiles W."/>
            <person name="Bents O."/>
            <person name="Lemcke K."/>
            <person name="Kolesov G."/>
            <person name="Mayer K.F.X."/>
            <person name="Rudd S."/>
            <person name="Schoof H."/>
            <person name="Schueller C."/>
            <person name="Zaccaria P."/>
            <person name="Mewes H.-W."/>
            <person name="Bevan M."/>
            <person name="Fransz P.F."/>
        </authorList>
    </citation>
    <scope>NUCLEOTIDE SEQUENCE [LARGE SCALE GENOMIC DNA]</scope>
    <source>
        <strain>cv. Columbia</strain>
    </source>
</reference>
<reference key="3">
    <citation type="journal article" date="2017" name="Plant J.">
        <title>Araport11: a complete reannotation of the Arabidopsis thaliana reference genome.</title>
        <authorList>
            <person name="Cheng C.Y."/>
            <person name="Krishnakumar V."/>
            <person name="Chan A.P."/>
            <person name="Thibaud-Nissen F."/>
            <person name="Schobel S."/>
            <person name="Town C.D."/>
        </authorList>
    </citation>
    <scope>GENOME REANNOTATION</scope>
    <source>
        <strain>cv. Columbia</strain>
    </source>
</reference>
<reference key="4">
    <citation type="journal article" date="2002" name="Science">
        <title>Functional annotation of a full-length Arabidopsis cDNA collection.</title>
        <authorList>
            <person name="Seki M."/>
            <person name="Narusaka M."/>
            <person name="Kamiya A."/>
            <person name="Ishida J."/>
            <person name="Satou M."/>
            <person name="Sakurai T."/>
            <person name="Nakajima M."/>
            <person name="Enju A."/>
            <person name="Akiyama K."/>
            <person name="Oono Y."/>
            <person name="Muramatsu M."/>
            <person name="Hayashizaki Y."/>
            <person name="Kawai J."/>
            <person name="Carninci P."/>
            <person name="Itoh M."/>
            <person name="Ishii Y."/>
            <person name="Arakawa T."/>
            <person name="Shibata K."/>
            <person name="Shinagawa A."/>
            <person name="Shinozaki K."/>
        </authorList>
    </citation>
    <scope>NUCLEOTIDE SEQUENCE [LARGE SCALE MRNA]</scope>
    <source>
        <strain>cv. Columbia</strain>
    </source>
</reference>
<reference key="5">
    <citation type="submission" date="2002-03" db="EMBL/GenBank/DDBJ databases">
        <title>Full-length cDNA from Arabidopsis thaliana.</title>
        <authorList>
            <person name="Brover V.V."/>
            <person name="Troukhan M.E."/>
            <person name="Alexandrov N.A."/>
            <person name="Lu Y.-P."/>
            <person name="Flavell R.B."/>
            <person name="Feldmann K.A."/>
        </authorList>
    </citation>
    <scope>NUCLEOTIDE SEQUENCE [LARGE SCALE MRNA]</scope>
</reference>
<reference key="6">
    <citation type="journal article" date="2012" name="Mol. Plant">
        <title>The Arabidopsis homolog of the mammalian OS-9 protein plays a key role in the endoplasmic reticulum-associated degradation of misfolded receptor-like kinases.</title>
        <authorList>
            <person name="Su W."/>
            <person name="Liu Y."/>
            <person name="Xia Y."/>
            <person name="Hong Z."/>
            <person name="Li J."/>
        </authorList>
    </citation>
    <scope>FUNCTION</scope>
    <scope>INTERACTION WITH HRD3A</scope>
    <scope>SUBCELLULAR LOCATION</scope>
    <scope>MUTAGENESIS OF TYR-132; GLN-142; GLY-191 AND GLU-221</scope>
</reference>
<reference key="7">
    <citation type="journal article" date="2012" name="Plant Mol. Biol.">
        <title>Unraveling the function of Arabidopsis thaliana OS9 in the endoplasmic reticulum-associated degradation of glycoproteins.</title>
        <authorList>
            <person name="Huttner S."/>
            <person name="Veit C."/>
            <person name="Schoberer J."/>
            <person name="Grass J."/>
            <person name="Strasser R."/>
        </authorList>
    </citation>
    <scope>FUNCTION</scope>
    <scope>INTERACTION WITH HRD3A</scope>
    <scope>SUBCELLULAR LOCATION</scope>
    <scope>GLYCOSYLATION AT ASN-94; ASN-169 AND ASN-190</scope>
    <scope>DISRUPTION PHENOTYPE</scope>
</reference>
<proteinExistence type="evidence at protein level"/>
<dbReference type="EMBL" id="AP000421">
    <property type="protein sequence ID" value="BAB10015.1"/>
    <property type="status" value="ALT_SEQ"/>
    <property type="molecule type" value="Genomic_DNA"/>
</dbReference>
<dbReference type="EMBL" id="AF058825">
    <property type="protein sequence ID" value="AAC13579.1"/>
    <property type="status" value="ALT_SEQ"/>
    <property type="molecule type" value="Genomic_DNA"/>
</dbReference>
<dbReference type="EMBL" id="CP002688">
    <property type="protein sequence ID" value="AED93928.1"/>
    <property type="molecule type" value="Genomic_DNA"/>
</dbReference>
<dbReference type="EMBL" id="AK118844">
    <property type="protein sequence ID" value="BAC43433.1"/>
    <property type="molecule type" value="mRNA"/>
</dbReference>
<dbReference type="EMBL" id="AY086270">
    <property type="protein sequence ID" value="AAM64343.1"/>
    <property type="molecule type" value="mRNA"/>
</dbReference>
<dbReference type="PIR" id="T01158">
    <property type="entry name" value="T01158"/>
</dbReference>
<dbReference type="RefSeq" id="NP_568525.1">
    <property type="nucleotide sequence ID" value="NM_122899.3"/>
</dbReference>
<dbReference type="SMR" id="Q8GWH3"/>
<dbReference type="BioGRID" id="18714">
    <property type="interactions" value="3"/>
</dbReference>
<dbReference type="FunCoup" id="Q8GWH3">
    <property type="interactions" value="1439"/>
</dbReference>
<dbReference type="STRING" id="3702.Q8GWH3"/>
<dbReference type="TCDB" id="3.A.16.1.5">
    <property type="family name" value="the endoplasmic reticular retrotranslocon (er-rt) family"/>
</dbReference>
<dbReference type="TCDB" id="8.A.67.1.2">
    <property type="family name" value="the os-9 quality control (erad) protein (os-9) family"/>
</dbReference>
<dbReference type="GlyCosmos" id="Q8GWH3">
    <property type="glycosylation" value="3 sites, No reported glycans"/>
</dbReference>
<dbReference type="GlyGen" id="Q8GWH3">
    <property type="glycosylation" value="3 sites"/>
</dbReference>
<dbReference type="PaxDb" id="3702-AT5G35080.1"/>
<dbReference type="ProteomicsDB" id="226035"/>
<dbReference type="EnsemblPlants" id="AT5G35080.1">
    <property type="protein sequence ID" value="AT5G35080.1"/>
    <property type="gene ID" value="AT5G35080"/>
</dbReference>
<dbReference type="GeneID" id="833459"/>
<dbReference type="Gramene" id="AT5G35080.1">
    <property type="protein sequence ID" value="AT5G35080.1"/>
    <property type="gene ID" value="AT5G35080"/>
</dbReference>
<dbReference type="KEGG" id="ath:AT5G35080"/>
<dbReference type="Araport" id="AT5G35080"/>
<dbReference type="TAIR" id="AT5G35080">
    <property type="gene designation" value="OS9"/>
</dbReference>
<dbReference type="eggNOG" id="KOG3394">
    <property type="taxonomic scope" value="Eukaryota"/>
</dbReference>
<dbReference type="HOGENOM" id="CLU_077023_0_0_1"/>
<dbReference type="InParanoid" id="Q8GWH3"/>
<dbReference type="OMA" id="TMCDLTN"/>
<dbReference type="PhylomeDB" id="Q8GWH3"/>
<dbReference type="PRO" id="PR:Q8GWH3"/>
<dbReference type="Proteomes" id="UP000006548">
    <property type="component" value="Chromosome 5"/>
</dbReference>
<dbReference type="ExpressionAtlas" id="Q8GWH3">
    <property type="expression patterns" value="baseline and differential"/>
</dbReference>
<dbReference type="GO" id="GO:0005783">
    <property type="term" value="C:endoplasmic reticulum"/>
    <property type="evidence" value="ECO:0000314"/>
    <property type="project" value="TAIR"/>
</dbReference>
<dbReference type="GO" id="GO:0009536">
    <property type="term" value="C:plastid"/>
    <property type="evidence" value="ECO:0007005"/>
    <property type="project" value="TAIR"/>
</dbReference>
<dbReference type="GO" id="GO:0030246">
    <property type="term" value="F:carbohydrate binding"/>
    <property type="evidence" value="ECO:0007669"/>
    <property type="project" value="UniProtKB-KW"/>
</dbReference>
<dbReference type="GO" id="GO:0030968">
    <property type="term" value="P:endoplasmic reticulum unfolded protein response"/>
    <property type="evidence" value="ECO:0007669"/>
    <property type="project" value="InterPro"/>
</dbReference>
<dbReference type="GO" id="GO:0036503">
    <property type="term" value="P:ERAD pathway"/>
    <property type="evidence" value="ECO:0000315"/>
    <property type="project" value="TAIR"/>
</dbReference>
<dbReference type="GO" id="GO:0009651">
    <property type="term" value="P:response to salt stress"/>
    <property type="evidence" value="ECO:0000315"/>
    <property type="project" value="TAIR"/>
</dbReference>
<dbReference type="FunFam" id="2.70.130.10:FF:000021">
    <property type="entry name" value="Protein OS-9 homolog"/>
    <property type="match status" value="1"/>
</dbReference>
<dbReference type="Gene3D" id="2.70.130.10">
    <property type="entry name" value="Mannose-6-phosphate receptor binding domain"/>
    <property type="match status" value="1"/>
</dbReference>
<dbReference type="InterPro" id="IPR009011">
    <property type="entry name" value="Man6P_isomerase_rcpt-bd_dom_sf"/>
</dbReference>
<dbReference type="InterPro" id="IPR044865">
    <property type="entry name" value="MRH_dom"/>
</dbReference>
<dbReference type="InterPro" id="IPR045149">
    <property type="entry name" value="OS-9-like"/>
</dbReference>
<dbReference type="InterPro" id="IPR012913">
    <property type="entry name" value="OS9-like_dom"/>
</dbReference>
<dbReference type="PANTHER" id="PTHR15414:SF0">
    <property type="entry name" value="ENDOPLASMIC RETICULUM LECTIN 1"/>
    <property type="match status" value="1"/>
</dbReference>
<dbReference type="PANTHER" id="PTHR15414">
    <property type="entry name" value="OS-9-RELATED"/>
    <property type="match status" value="1"/>
</dbReference>
<dbReference type="Pfam" id="PF07915">
    <property type="entry name" value="PRKCSH"/>
    <property type="match status" value="1"/>
</dbReference>
<dbReference type="SUPFAM" id="SSF50911">
    <property type="entry name" value="Mannose 6-phosphate receptor domain"/>
    <property type="match status" value="1"/>
</dbReference>
<dbReference type="PROSITE" id="PS51914">
    <property type="entry name" value="MRH"/>
    <property type="match status" value="1"/>
</dbReference>
<accession>Q8GWH3</accession>
<accession>O65221</accession>
<accession>Q8LD14</accession>